<protein>
    <recommendedName>
        <fullName evidence="2">Ferroportin</fullName>
    </recommendedName>
    <alternativeName>
        <fullName evidence="2">Solute carrier family 40 protein member 1</fullName>
    </alternativeName>
</protein>
<feature type="chain" id="PRO_0000454470" description="Ferroportin">
    <location>
        <begin position="1"/>
        <end position="576"/>
    </location>
</feature>
<feature type="topological domain" description="Cytoplasmic" evidence="2">
    <location>
        <begin position="1"/>
        <end position="23"/>
    </location>
</feature>
<feature type="transmembrane region" description="Helical" evidence="2">
    <location>
        <begin position="24"/>
        <end position="53"/>
    </location>
</feature>
<feature type="topological domain" description="Extracellular" evidence="2">
    <location>
        <begin position="54"/>
        <end position="57"/>
    </location>
</feature>
<feature type="transmembrane region" description="Helical" evidence="2">
    <location>
        <begin position="58"/>
        <end position="84"/>
    </location>
</feature>
<feature type="topological domain" description="Cytoplasmic" evidence="2">
    <location>
        <begin position="85"/>
        <end position="87"/>
    </location>
</feature>
<feature type="transmembrane region" description="Helical" evidence="2">
    <location>
        <begin position="88"/>
        <end position="118"/>
    </location>
</feature>
<feature type="topological domain" description="Extracellular" evidence="2">
    <location>
        <begin position="119"/>
        <end position="126"/>
    </location>
</feature>
<feature type="transmembrane region" description="Helical" evidence="2">
    <location>
        <begin position="127"/>
        <end position="162"/>
    </location>
</feature>
<feature type="topological domain" description="Cytoplasmic" evidence="2">
    <location>
        <begin position="163"/>
        <end position="164"/>
    </location>
</feature>
<feature type="transmembrane region" description="Helical" evidence="2">
    <location>
        <begin position="165"/>
        <end position="195"/>
    </location>
</feature>
<feature type="topological domain" description="Extracellular" evidence="2">
    <location>
        <begin position="196"/>
        <end position="202"/>
    </location>
</feature>
<feature type="transmembrane region" description="Helical" evidence="2">
    <location>
        <begin position="203"/>
        <end position="229"/>
    </location>
</feature>
<feature type="topological domain" description="Cytoplasmic" evidence="2">
    <location>
        <begin position="230"/>
        <end position="306"/>
    </location>
</feature>
<feature type="transmembrane region" description="Helical" evidence="2">
    <location>
        <begin position="307"/>
        <end position="333"/>
    </location>
</feature>
<feature type="topological domain" description="Extracellular" evidence="2">
    <location>
        <begin position="334"/>
        <end position="338"/>
    </location>
</feature>
<feature type="transmembrane region" description="Helical" evidence="2">
    <location>
        <begin position="339"/>
        <end position="366"/>
    </location>
</feature>
<feature type="topological domain" description="Cytoplasmic" evidence="2">
    <location>
        <begin position="367"/>
        <end position="368"/>
    </location>
</feature>
<feature type="transmembrane region" description="Helical" evidence="2">
    <location>
        <begin position="369"/>
        <end position="391"/>
    </location>
</feature>
<feature type="topological domain" description="Extracellular" evidence="2">
    <location>
        <begin position="392"/>
        <end position="458"/>
    </location>
</feature>
<feature type="transmembrane region" description="Helical" evidence="2">
    <location>
        <begin position="459"/>
        <end position="488"/>
    </location>
</feature>
<feature type="topological domain" description="Cytoplasmic" evidence="2">
    <location>
        <begin position="489"/>
        <end position="493"/>
    </location>
</feature>
<feature type="transmembrane region" description="Helical" evidence="2">
    <location>
        <begin position="494"/>
        <end position="518"/>
    </location>
</feature>
<feature type="topological domain" description="Extracellular" evidence="2">
    <location>
        <begin position="519"/>
        <end position="521"/>
    </location>
</feature>
<feature type="transmembrane region" description="Helical" evidence="2">
    <location>
        <begin position="522"/>
        <end position="547"/>
    </location>
</feature>
<feature type="topological domain" description="Cytoplasmic" evidence="2">
    <location>
        <begin position="548"/>
        <end position="576"/>
    </location>
</feature>
<feature type="binding site" evidence="2">
    <location>
        <position position="39"/>
    </location>
    <ligand>
        <name>Fe cation</name>
        <dbReference type="ChEBI" id="CHEBI:24875"/>
        <label>1</label>
    </ligand>
</feature>
<feature type="binding site" evidence="2">
    <location>
        <position position="43"/>
    </location>
    <ligand>
        <name>Fe cation</name>
        <dbReference type="ChEBI" id="CHEBI:24875"/>
        <label>1</label>
    </ligand>
</feature>
<feature type="binding site" evidence="2">
    <location>
        <position position="326"/>
    </location>
    <ligand>
        <name>Fe cation</name>
        <dbReference type="ChEBI" id="CHEBI:24875"/>
        <label>2</label>
    </ligand>
</feature>
<feature type="binding site" evidence="2">
    <location>
        <position position="512"/>
    </location>
    <ligand>
        <name>Fe cation</name>
        <dbReference type="ChEBI" id="CHEBI:24875"/>
        <label>2</label>
    </ligand>
</feature>
<feature type="glycosylation site" description="N-linked (GlcNAc...) asparagine" evidence="3">
    <location>
        <position position="439"/>
    </location>
</feature>
<feature type="splice variant" id="VSP_061344" description="In isoform 2." evidence="5">
    <original>GLWSFDLTVTQLLQENVIESERGIINGVQNSMNYLLDLLHFIMVILAPNPEAFGLLVLISVSFV</original>
    <variation>ASRHFSVNEKERAAEDRGDEEKTGERRQVRHWGMGGEFTCPPLFGQGSHGAPVFIQSPPQVSLG</variation>
    <location>
        <begin position="473"/>
        <end position="536"/>
    </location>
</feature>
<feature type="splice variant" id="VSP_061345" description="In isoform 2." evidence="5">
    <location>
        <begin position="537"/>
        <end position="576"/>
    </location>
</feature>
<comment type="function">
    <text evidence="1 2">Transports Fe(2+) from the inside of a cell to the outside of the cell, playing a key role for maintaining systemic iron homeostasis (By similarity). Transports iron from intestinal, splenic, hepatic cells, macrophages and erythrocytes into the blood to provide iron to other tissues. Controls therefore dietary iron uptake, iron recycling by macrophages and erythrocytes, and release of iron stores in hepatocytes (By similarity). When iron is in excess in serum, circulating HAMP/hepcidin levels increase resulting in a degradation of SLC40A1, thus limiting the iron efflux to plasma (By similarity).</text>
</comment>
<comment type="catalytic activity">
    <reaction evidence="2">
        <text>Fe(2+)(in) = Fe(2+)(out)</text>
        <dbReference type="Rhea" id="RHEA:28486"/>
        <dbReference type="ChEBI" id="CHEBI:29033"/>
    </reaction>
</comment>
<comment type="activity regulation">
    <text evidence="2">During elevated serum iron levels, liver-derived hepcidin/HAMP negatively regulates cell surface ferroportin/SLC40A1 by inducing its ubiquitination, internalization, and degradation. Indeed, hepcidin/HAMP affinity towards ferroportin/SLC40A1 increases by 80-fold in the presence of iron.</text>
</comment>
<comment type="subunit">
    <text evidence="2">Identified in a complex with STOM. Interacts with HAMP; affinity of the peptide hormone HAMP for SLC40A1 increases by 80-fold in the presence of iron and the interaction promotes SLC40A1 ubiquitination and degradation. Part of a complex composed of SLC40A1/ferroportin, TF/transferrin and HEPH/hephaestin that transfers iron from cells to transferrin.</text>
</comment>
<comment type="subcellular location">
    <subcellularLocation>
        <location evidence="2">Cell membrane</location>
        <topology evidence="2">Multi-pass membrane protein</topology>
    </subcellularLocation>
    <subcellularLocation>
        <location evidence="2">Basolateral cell membrane</location>
        <topology evidence="2">Multi-pass membrane protein</topology>
    </subcellularLocation>
    <text evidence="2">Localized to the basolateral membrane of polarized epithelial cells.</text>
</comment>
<comment type="alternative products">
    <event type="alternative splicing"/>
    <isoform>
        <id>E2RFJ3-1</id>
        <name>1</name>
        <sequence type="displayed"/>
    </isoform>
    <isoform>
        <id>E2RFJ3-2</id>
        <name>2</name>
        <sequence type="described" ref="VSP_061344 VSP_061345"/>
    </isoform>
</comment>
<comment type="PTM">
    <text evidence="1 2">Polyubiquitinated by RNF217; leading to proteasomal degradation (By similarity). Under conditions of high systemic iron levels, both the hormone peptide hepcidin/HAMP and holo(iron bound)-transferrin/TF induce the ubiquitination, internalization and proteasomal degradation of SLC40A1 to control iron release from cells (By similarity).</text>
</comment>
<comment type="similarity">
    <text evidence="4">Belongs to the ferroportin (FP) (TC 2.A.100) family. SLC40A subfamily.</text>
</comment>
<comment type="caution">
    <text evidence="1 2 5">Manganese (Mn) transport by SLC40A1 remains controversial. Some in vitro studies have suggested that SLC40A1 transports minimal amounts of Mn(2+) (By similarity). Other groups have suggested that it does not. The affinity of SLC40A1 for manganese is extremely low compared with iron, implying that any SLC40A1-mediated Mn transport in vivo would likely be trivial (By similarity). A recent study examined the role of SLC40A1 in Mn homeostasis by using Tmprss6-O mice, which express high levels of hepcidin/HAMP and therefore have very low SLC40A1 levels in their tissues. These mice show frank iron deficiency and reduced iron levels in most tissues, but manganese levels are largely unaffected (By similarity). These studies suggest that manganese is propably not the physiological substrate of SLC40A1.</text>
</comment>
<accession>E2RFJ3</accession>
<accession>A0A5F4D1S7</accession>
<proteinExistence type="inferred from homology"/>
<sequence>MPKAGEQARQGGCCGSLANYLTSAKFLLYLGHSLSTWGDRMWHFAVSVFLVELYGNSLLLTAVYGLVVAGSVLVLGAIIGDWVDKNARLKVAQTSLVVQNVSVILCGIILMMVFLHKNELLTMYHGWVLTFCYILIITIADVANLASTATAITIQRDWIVVVAGGDRSKLADMNATIRRIDQLTNILAPMAVGQIMTFGSAVIGCGFISGWNLVSMCVEYFLLWKVYQKTPALAVKAALKVEEAELKQLNLHKETEPKPLEGTHLMGEKDPNVHELEHEQEPSCASQMAEPFRTFRDGWVSYYNQSVFLAGMGLAFLYMTVLGFDCITTGYAYTQGLSGSILSILMGASAITGIMGTVAFTWLRRKCGLVRTGLISGFAQLSCLILCVISVFMPGSPLDLSVSPFEDIRSRFIQAEPLSTMTPTKVPEIIFTTEMHMSNGSDPAGIFPETTPKSVPIISVSLLFAGVIAARIGLWSFDLTVTQLLQENVIESERGIINGVQNSMNYLLDLLHFIMVILAPNPEAFGLLVLISVSFVAMGHIMYFRFAQKTLGSKLFACGADDEEVTNENQANTSVV</sequence>
<dbReference type="EMBL" id="AAEX03017890">
    <property type="status" value="NOT_ANNOTATED_CDS"/>
    <property type="molecule type" value="Genomic_DNA"/>
</dbReference>
<dbReference type="EMBL" id="AAEX03017891">
    <property type="status" value="NOT_ANNOTATED_CDS"/>
    <property type="molecule type" value="Genomic_DNA"/>
</dbReference>
<dbReference type="RefSeq" id="XP_038303286.1">
    <molecule id="E2RFJ3-1"/>
    <property type="nucleotide sequence ID" value="XM_038447358.1"/>
</dbReference>
<dbReference type="RefSeq" id="XP_038441050.1">
    <molecule id="E2RFJ3-1"/>
    <property type="nucleotide sequence ID" value="XM_038585122.1"/>
</dbReference>
<dbReference type="RefSeq" id="XP_535999.2">
    <molecule id="E2RFJ3-1"/>
    <property type="nucleotide sequence ID" value="XM_535999.5"/>
</dbReference>
<dbReference type="SMR" id="E2RFJ3"/>
<dbReference type="FunCoup" id="E2RFJ3">
    <property type="interactions" value="27"/>
</dbReference>
<dbReference type="STRING" id="9615.ENSCAFP00000013769"/>
<dbReference type="GlyCosmos" id="E2RFJ3">
    <property type="glycosylation" value="1 site, No reported glycans"/>
</dbReference>
<dbReference type="PaxDb" id="9612-ENSCAFP00000013769"/>
<dbReference type="Ensembl" id="ENSCAFT00030026901.1">
    <molecule id="E2RFJ3-2"/>
    <property type="protein sequence ID" value="ENSCAFP00030023473.1"/>
    <property type="gene ID" value="ENSCAFG00030014579.1"/>
</dbReference>
<dbReference type="Ensembl" id="ENSCAFT00030027048.1">
    <molecule id="E2RFJ3-1"/>
    <property type="protein sequence ID" value="ENSCAFP00030023609.1"/>
    <property type="gene ID" value="ENSCAFG00030014579.1"/>
</dbReference>
<dbReference type="Ensembl" id="ENSCAFT00040022271.1">
    <molecule id="E2RFJ3-2"/>
    <property type="protein sequence ID" value="ENSCAFP00040019318.1"/>
    <property type="gene ID" value="ENSCAFG00040012065.1"/>
</dbReference>
<dbReference type="Ensembl" id="ENSCAFT00040022421.1">
    <molecule id="E2RFJ3-1"/>
    <property type="protein sequence ID" value="ENSCAFP00040019440.1"/>
    <property type="gene ID" value="ENSCAFG00040012065.1"/>
</dbReference>
<dbReference type="GeneID" id="478837"/>
<dbReference type="CTD" id="30061"/>
<dbReference type="eggNOG" id="KOG2601">
    <property type="taxonomic scope" value="Eukaryota"/>
</dbReference>
<dbReference type="HOGENOM" id="CLU_020370_1_1_1"/>
<dbReference type="InParanoid" id="E2RFJ3"/>
<dbReference type="OrthoDB" id="648861at2759"/>
<dbReference type="TreeFam" id="TF313463"/>
<dbReference type="Reactome" id="R-CFA-425410">
    <property type="pathway name" value="Metal ion SLC transporters"/>
</dbReference>
<dbReference type="Reactome" id="R-CFA-917937">
    <property type="pathway name" value="Iron uptake and transport"/>
</dbReference>
<dbReference type="Proteomes" id="UP000002254">
    <property type="component" value="Unplaced"/>
</dbReference>
<dbReference type="Proteomes" id="UP000694429">
    <property type="component" value="Chromosome 37"/>
</dbReference>
<dbReference type="Proteomes" id="UP000694542">
    <property type="component" value="Chromosome 37"/>
</dbReference>
<dbReference type="Proteomes" id="UP000805418">
    <property type="component" value="Unplaced"/>
</dbReference>
<dbReference type="Bgee" id="ENSCAFG00000009343">
    <property type="expression patterns" value="Expressed in hair follicle and 45 other cell types or tissues"/>
</dbReference>
<dbReference type="GO" id="GO:0016323">
    <property type="term" value="C:basolateral plasma membrane"/>
    <property type="evidence" value="ECO:0000318"/>
    <property type="project" value="GO_Central"/>
</dbReference>
<dbReference type="GO" id="GO:0005381">
    <property type="term" value="F:iron ion transmembrane transporter activity"/>
    <property type="evidence" value="ECO:0000318"/>
    <property type="project" value="GO_Central"/>
</dbReference>
<dbReference type="GO" id="GO:0046872">
    <property type="term" value="F:metal ion binding"/>
    <property type="evidence" value="ECO:0007669"/>
    <property type="project" value="UniProtKB-KW"/>
</dbReference>
<dbReference type="GO" id="GO:0017046">
    <property type="term" value="F:peptide hormone binding"/>
    <property type="evidence" value="ECO:0000318"/>
    <property type="project" value="GO_Central"/>
</dbReference>
<dbReference type="GO" id="GO:1903988">
    <property type="term" value="P:iron ion export across plasma membrane"/>
    <property type="evidence" value="ECO:0000250"/>
    <property type="project" value="UniProtKB"/>
</dbReference>
<dbReference type="GO" id="GO:0034755">
    <property type="term" value="P:iron ion transmembrane transport"/>
    <property type="evidence" value="ECO:0000318"/>
    <property type="project" value="GO_Central"/>
</dbReference>
<dbReference type="CDD" id="cd17480">
    <property type="entry name" value="MFS_SLC40A1_like"/>
    <property type="match status" value="1"/>
</dbReference>
<dbReference type="Gene3D" id="1.20.1250.20">
    <property type="entry name" value="MFS general substrate transporter like domains"/>
    <property type="match status" value="1"/>
</dbReference>
<dbReference type="InterPro" id="IPR009716">
    <property type="entry name" value="Ferroportin-1"/>
</dbReference>
<dbReference type="InterPro" id="IPR036259">
    <property type="entry name" value="MFS_trans_sf"/>
</dbReference>
<dbReference type="PANTHER" id="PTHR11660">
    <property type="entry name" value="SOLUTE CARRIER FAMILY 40 MEMBER"/>
    <property type="match status" value="1"/>
</dbReference>
<dbReference type="PANTHER" id="PTHR11660:SF47">
    <property type="entry name" value="SOLUTE CARRIER FAMILY 40 MEMBER 1"/>
    <property type="match status" value="1"/>
</dbReference>
<dbReference type="Pfam" id="PF06963">
    <property type="entry name" value="FPN1"/>
    <property type="match status" value="1"/>
</dbReference>
<dbReference type="SUPFAM" id="SSF103473">
    <property type="entry name" value="MFS general substrate transporter"/>
    <property type="match status" value="1"/>
</dbReference>
<keyword id="KW-0025">Alternative splicing</keyword>
<keyword id="KW-1003">Cell membrane</keyword>
<keyword id="KW-0325">Glycoprotein</keyword>
<keyword id="KW-0406">Ion transport</keyword>
<keyword id="KW-0408">Iron</keyword>
<keyword id="KW-0472">Membrane</keyword>
<keyword id="KW-0479">Metal-binding</keyword>
<keyword id="KW-1185">Reference proteome</keyword>
<keyword id="KW-0812">Transmembrane</keyword>
<keyword id="KW-1133">Transmembrane helix</keyword>
<keyword id="KW-0813">Transport</keyword>
<keyword id="KW-0832">Ubl conjugation</keyword>
<gene>
    <name evidence="2" type="primary">SLC40A1</name>
</gene>
<name>S40A1_CANLF</name>
<organism evidence="6">
    <name type="scientific">Canis lupus familiaris</name>
    <name type="common">Dog</name>
    <name type="synonym">Canis familiaris</name>
    <dbReference type="NCBI Taxonomy" id="9615"/>
    <lineage>
        <taxon>Eukaryota</taxon>
        <taxon>Metazoa</taxon>
        <taxon>Chordata</taxon>
        <taxon>Craniata</taxon>
        <taxon>Vertebrata</taxon>
        <taxon>Euteleostomi</taxon>
        <taxon>Mammalia</taxon>
        <taxon>Eutheria</taxon>
        <taxon>Laurasiatheria</taxon>
        <taxon>Carnivora</taxon>
        <taxon>Caniformia</taxon>
        <taxon>Canidae</taxon>
        <taxon>Canis</taxon>
    </lineage>
</organism>
<evidence type="ECO:0000250" key="1">
    <source>
        <dbReference type="UniProtKB" id="Q9JHI9"/>
    </source>
</evidence>
<evidence type="ECO:0000250" key="2">
    <source>
        <dbReference type="UniProtKB" id="Q9NP59"/>
    </source>
</evidence>
<evidence type="ECO:0000255" key="3">
    <source>
        <dbReference type="PROSITE-ProRule" id="PRU00498"/>
    </source>
</evidence>
<evidence type="ECO:0000255" key="4">
    <source>
        <dbReference type="RuleBase" id="RU365065"/>
    </source>
</evidence>
<evidence type="ECO:0000305" key="5"/>
<evidence type="ECO:0000312" key="6">
    <source>
        <dbReference type="Proteomes" id="UP000002254"/>
    </source>
</evidence>
<reference evidence="6" key="1">
    <citation type="journal article" date="2005" name="Nature">
        <title>Genome sequence, comparative analysis and haplotype structure of the domestic dog.</title>
        <authorList>
            <person name="Lindblad-Toh K."/>
            <person name="Wade C.M."/>
            <person name="Mikkelsen T.S."/>
            <person name="Karlsson E.K."/>
            <person name="Jaffe D.B."/>
            <person name="Kamal M."/>
            <person name="Clamp M."/>
            <person name="Chang J.L."/>
            <person name="Kulbokas E.J. III"/>
            <person name="Zody M.C."/>
            <person name="Mauceli E."/>
            <person name="Xie X."/>
            <person name="Breen M."/>
            <person name="Wayne R.K."/>
            <person name="Ostrander E.A."/>
            <person name="Ponting C.P."/>
            <person name="Galibert F."/>
            <person name="Smith D.R."/>
            <person name="deJong P.J."/>
            <person name="Kirkness E.F."/>
            <person name="Alvarez P."/>
            <person name="Biagi T."/>
            <person name="Brockman W."/>
            <person name="Butler J."/>
            <person name="Chin C.-W."/>
            <person name="Cook A."/>
            <person name="Cuff J."/>
            <person name="Daly M.J."/>
            <person name="DeCaprio D."/>
            <person name="Gnerre S."/>
            <person name="Grabherr M."/>
            <person name="Kellis M."/>
            <person name="Kleber M."/>
            <person name="Bardeleben C."/>
            <person name="Goodstadt L."/>
            <person name="Heger A."/>
            <person name="Hitte C."/>
            <person name="Kim L."/>
            <person name="Koepfli K.-P."/>
            <person name="Parker H.G."/>
            <person name="Pollinger J.P."/>
            <person name="Searle S.M.J."/>
            <person name="Sutter N.B."/>
            <person name="Thomas R."/>
            <person name="Webber C."/>
            <person name="Baldwin J."/>
            <person name="Abebe A."/>
            <person name="Abouelleil A."/>
            <person name="Aftuck L."/>
            <person name="Ait-Zahra M."/>
            <person name="Aldredge T."/>
            <person name="Allen N."/>
            <person name="An P."/>
            <person name="Anderson S."/>
            <person name="Antoine C."/>
            <person name="Arachchi H."/>
            <person name="Aslam A."/>
            <person name="Ayotte L."/>
            <person name="Bachantsang P."/>
            <person name="Barry A."/>
            <person name="Bayul T."/>
            <person name="Benamara M."/>
            <person name="Berlin A."/>
            <person name="Bessette D."/>
            <person name="Blitshteyn B."/>
            <person name="Bloom T."/>
            <person name="Blye J."/>
            <person name="Boguslavskiy L."/>
            <person name="Bonnet C."/>
            <person name="Boukhgalter B."/>
            <person name="Brown A."/>
            <person name="Cahill P."/>
            <person name="Calixte N."/>
            <person name="Camarata J."/>
            <person name="Cheshatsang Y."/>
            <person name="Chu J."/>
            <person name="Citroen M."/>
            <person name="Collymore A."/>
            <person name="Cooke P."/>
            <person name="Dawoe T."/>
            <person name="Daza R."/>
            <person name="Decktor K."/>
            <person name="DeGray S."/>
            <person name="Dhargay N."/>
            <person name="Dooley K."/>
            <person name="Dooley K."/>
            <person name="Dorje P."/>
            <person name="Dorjee K."/>
            <person name="Dorris L."/>
            <person name="Duffey N."/>
            <person name="Dupes A."/>
            <person name="Egbiremolen O."/>
            <person name="Elong R."/>
            <person name="Falk J."/>
            <person name="Farina A."/>
            <person name="Faro S."/>
            <person name="Ferguson D."/>
            <person name="Ferreira P."/>
            <person name="Fisher S."/>
            <person name="FitzGerald M."/>
            <person name="Foley K."/>
            <person name="Foley C."/>
            <person name="Franke A."/>
            <person name="Friedrich D."/>
            <person name="Gage D."/>
            <person name="Garber M."/>
            <person name="Gearin G."/>
            <person name="Giannoukos G."/>
            <person name="Goode T."/>
            <person name="Goyette A."/>
            <person name="Graham J."/>
            <person name="Grandbois E."/>
            <person name="Gyaltsen K."/>
            <person name="Hafez N."/>
            <person name="Hagopian D."/>
            <person name="Hagos B."/>
            <person name="Hall J."/>
            <person name="Healy C."/>
            <person name="Hegarty R."/>
            <person name="Honan T."/>
            <person name="Horn A."/>
            <person name="Houde N."/>
            <person name="Hughes L."/>
            <person name="Hunnicutt L."/>
            <person name="Husby M."/>
            <person name="Jester B."/>
            <person name="Jones C."/>
            <person name="Kamat A."/>
            <person name="Kanga B."/>
            <person name="Kells C."/>
            <person name="Khazanovich D."/>
            <person name="Kieu A.C."/>
            <person name="Kisner P."/>
            <person name="Kumar M."/>
            <person name="Lance K."/>
            <person name="Landers T."/>
            <person name="Lara M."/>
            <person name="Lee W."/>
            <person name="Leger J.-P."/>
            <person name="Lennon N."/>
            <person name="Leuper L."/>
            <person name="LeVine S."/>
            <person name="Liu J."/>
            <person name="Liu X."/>
            <person name="Lokyitsang Y."/>
            <person name="Lokyitsang T."/>
            <person name="Lui A."/>
            <person name="Macdonald J."/>
            <person name="Major J."/>
            <person name="Marabella R."/>
            <person name="Maru K."/>
            <person name="Matthews C."/>
            <person name="McDonough S."/>
            <person name="Mehta T."/>
            <person name="Meldrim J."/>
            <person name="Melnikov A."/>
            <person name="Meneus L."/>
            <person name="Mihalev A."/>
            <person name="Mihova T."/>
            <person name="Miller K."/>
            <person name="Mittelman R."/>
            <person name="Mlenga V."/>
            <person name="Mulrain L."/>
            <person name="Munson G."/>
            <person name="Navidi A."/>
            <person name="Naylor J."/>
            <person name="Nguyen T."/>
            <person name="Nguyen N."/>
            <person name="Nguyen C."/>
            <person name="Nguyen T."/>
            <person name="Nicol R."/>
            <person name="Norbu N."/>
            <person name="Norbu C."/>
            <person name="Novod N."/>
            <person name="Nyima T."/>
            <person name="Olandt P."/>
            <person name="O'Neill B."/>
            <person name="O'Neill K."/>
            <person name="Osman S."/>
            <person name="Oyono L."/>
            <person name="Patti C."/>
            <person name="Perrin D."/>
            <person name="Phunkhang P."/>
            <person name="Pierre F."/>
            <person name="Priest M."/>
            <person name="Rachupka A."/>
            <person name="Raghuraman S."/>
            <person name="Rameau R."/>
            <person name="Ray V."/>
            <person name="Raymond C."/>
            <person name="Rege F."/>
            <person name="Rise C."/>
            <person name="Rogers J."/>
            <person name="Rogov P."/>
            <person name="Sahalie J."/>
            <person name="Settipalli S."/>
            <person name="Sharpe T."/>
            <person name="Shea T."/>
            <person name="Sheehan M."/>
            <person name="Sherpa N."/>
            <person name="Shi J."/>
            <person name="Shih D."/>
            <person name="Sloan J."/>
            <person name="Smith C."/>
            <person name="Sparrow T."/>
            <person name="Stalker J."/>
            <person name="Stange-Thomann N."/>
            <person name="Stavropoulos S."/>
            <person name="Stone C."/>
            <person name="Stone S."/>
            <person name="Sykes S."/>
            <person name="Tchuinga P."/>
            <person name="Tenzing P."/>
            <person name="Tesfaye S."/>
            <person name="Thoulutsang D."/>
            <person name="Thoulutsang Y."/>
            <person name="Topham K."/>
            <person name="Topping I."/>
            <person name="Tsamla T."/>
            <person name="Vassiliev H."/>
            <person name="Venkataraman V."/>
            <person name="Vo A."/>
            <person name="Wangchuk T."/>
            <person name="Wangdi T."/>
            <person name="Weiand M."/>
            <person name="Wilkinson J."/>
            <person name="Wilson A."/>
            <person name="Yadav S."/>
            <person name="Yang S."/>
            <person name="Yang X."/>
            <person name="Young G."/>
            <person name="Yu Q."/>
            <person name="Zainoun J."/>
            <person name="Zembek L."/>
            <person name="Zimmer A."/>
            <person name="Lander E.S."/>
        </authorList>
    </citation>
    <scope>NUCLEOTIDE SEQUENCE [LARGE SCALE GENOMIC DNA]</scope>
    <source>
        <strain evidence="6">Boxer</strain>
    </source>
</reference>